<organism>
    <name type="scientific">Vibrio cholerae serotype O1 (strain ATCC 39541 / Classical Ogawa 395 / O395)</name>
    <dbReference type="NCBI Taxonomy" id="345073"/>
    <lineage>
        <taxon>Bacteria</taxon>
        <taxon>Pseudomonadati</taxon>
        <taxon>Pseudomonadota</taxon>
        <taxon>Gammaproteobacteria</taxon>
        <taxon>Vibrionales</taxon>
        <taxon>Vibrionaceae</taxon>
        <taxon>Vibrio</taxon>
    </lineage>
</organism>
<protein>
    <recommendedName>
        <fullName evidence="1">Large ribosomal subunit protein bL31B</fullName>
    </recommendedName>
    <alternativeName>
        <fullName evidence="2">50S ribosomal protein L31 type B</fullName>
    </alternativeName>
</protein>
<keyword id="KW-0687">Ribonucleoprotein</keyword>
<keyword id="KW-0689">Ribosomal protein</keyword>
<name>RL31B_VIBC3</name>
<sequence>MKAGIHPDYRKVVFHDTTVDHYFVVGSTLQTDRTIEWEGKTYPYITIEVSSESHPFYTGKQRVVQKEGRVANFTRRFGQFAKESK</sequence>
<evidence type="ECO:0000255" key="1">
    <source>
        <dbReference type="HAMAP-Rule" id="MF_00502"/>
    </source>
</evidence>
<evidence type="ECO:0000305" key="2"/>
<reference key="1">
    <citation type="submission" date="2007-03" db="EMBL/GenBank/DDBJ databases">
        <authorList>
            <person name="Heidelberg J."/>
        </authorList>
    </citation>
    <scope>NUCLEOTIDE SEQUENCE [LARGE SCALE GENOMIC DNA]</scope>
    <source>
        <strain>ATCC 39541 / Classical Ogawa 395 / O395</strain>
    </source>
</reference>
<reference key="2">
    <citation type="journal article" date="2008" name="PLoS ONE">
        <title>A recalibrated molecular clock and independent origins for the cholera pandemic clones.</title>
        <authorList>
            <person name="Feng L."/>
            <person name="Reeves P.R."/>
            <person name="Lan R."/>
            <person name="Ren Y."/>
            <person name="Gao C."/>
            <person name="Zhou Z."/>
            <person name="Ren Y."/>
            <person name="Cheng J."/>
            <person name="Wang W."/>
            <person name="Wang J."/>
            <person name="Qian W."/>
            <person name="Li D."/>
            <person name="Wang L."/>
        </authorList>
    </citation>
    <scope>NUCLEOTIDE SEQUENCE [LARGE SCALE GENOMIC DNA]</scope>
    <source>
        <strain>ATCC 39541 / Classical Ogawa 395 / O395</strain>
    </source>
</reference>
<feature type="chain" id="PRO_1000072443" description="Large ribosomal subunit protein bL31B">
    <location>
        <begin position="1"/>
        <end position="85"/>
    </location>
</feature>
<proteinExistence type="inferred from homology"/>
<accession>A5F342</accession>
<accession>C3LYP2</accession>
<gene>
    <name evidence="1" type="primary">rpmE2</name>
    <name type="ordered locus">VC0395_A0402</name>
    <name type="ordered locus">VC395_0894</name>
</gene>
<comment type="subunit">
    <text evidence="1">Part of the 50S ribosomal subunit.</text>
</comment>
<comment type="similarity">
    <text evidence="1">Belongs to the bacterial ribosomal protein bL31 family. Type B subfamily.</text>
</comment>
<dbReference type="EMBL" id="CP000627">
    <property type="protein sequence ID" value="ABQ19471.1"/>
    <property type="molecule type" value="Genomic_DNA"/>
</dbReference>
<dbReference type="EMBL" id="CP001235">
    <property type="protein sequence ID" value="ACP08908.1"/>
    <property type="molecule type" value="Genomic_DNA"/>
</dbReference>
<dbReference type="RefSeq" id="WP_000643440.1">
    <property type="nucleotide sequence ID" value="NZ_JAACZH010000033.1"/>
</dbReference>
<dbReference type="SMR" id="A5F342"/>
<dbReference type="KEGG" id="vco:VC0395_A0402"/>
<dbReference type="KEGG" id="vcr:VC395_0894"/>
<dbReference type="PATRIC" id="fig|345073.21.peg.865"/>
<dbReference type="eggNOG" id="COG0254">
    <property type="taxonomic scope" value="Bacteria"/>
</dbReference>
<dbReference type="HOGENOM" id="CLU_114306_2_1_6"/>
<dbReference type="OrthoDB" id="9803251at2"/>
<dbReference type="Proteomes" id="UP000000249">
    <property type="component" value="Chromosome 2"/>
</dbReference>
<dbReference type="GO" id="GO:1990904">
    <property type="term" value="C:ribonucleoprotein complex"/>
    <property type="evidence" value="ECO:0007669"/>
    <property type="project" value="UniProtKB-KW"/>
</dbReference>
<dbReference type="GO" id="GO:0005840">
    <property type="term" value="C:ribosome"/>
    <property type="evidence" value="ECO:0007669"/>
    <property type="project" value="UniProtKB-KW"/>
</dbReference>
<dbReference type="GO" id="GO:0003735">
    <property type="term" value="F:structural constituent of ribosome"/>
    <property type="evidence" value="ECO:0007669"/>
    <property type="project" value="InterPro"/>
</dbReference>
<dbReference type="GO" id="GO:0006412">
    <property type="term" value="P:translation"/>
    <property type="evidence" value="ECO:0007669"/>
    <property type="project" value="UniProtKB-UniRule"/>
</dbReference>
<dbReference type="Gene3D" id="4.10.830.30">
    <property type="entry name" value="Ribosomal protein L31"/>
    <property type="match status" value="1"/>
</dbReference>
<dbReference type="HAMAP" id="MF_00502">
    <property type="entry name" value="Ribosomal_bL31_2"/>
    <property type="match status" value="1"/>
</dbReference>
<dbReference type="InterPro" id="IPR034704">
    <property type="entry name" value="Ribosomal_bL28/bL31-like_sf"/>
</dbReference>
<dbReference type="InterPro" id="IPR002150">
    <property type="entry name" value="Ribosomal_bL31"/>
</dbReference>
<dbReference type="InterPro" id="IPR027493">
    <property type="entry name" value="Ribosomal_bL31_B"/>
</dbReference>
<dbReference type="InterPro" id="IPR042105">
    <property type="entry name" value="Ribosomal_bL31_sf"/>
</dbReference>
<dbReference type="NCBIfam" id="TIGR00105">
    <property type="entry name" value="L31"/>
    <property type="match status" value="1"/>
</dbReference>
<dbReference type="NCBIfam" id="NF002462">
    <property type="entry name" value="PRK01678.1"/>
    <property type="match status" value="1"/>
</dbReference>
<dbReference type="PANTHER" id="PTHR33280">
    <property type="entry name" value="50S RIBOSOMAL PROTEIN L31, CHLOROPLASTIC"/>
    <property type="match status" value="1"/>
</dbReference>
<dbReference type="PANTHER" id="PTHR33280:SF1">
    <property type="entry name" value="LARGE RIBOSOMAL SUBUNIT PROTEIN BL31C"/>
    <property type="match status" value="1"/>
</dbReference>
<dbReference type="Pfam" id="PF01197">
    <property type="entry name" value="Ribosomal_L31"/>
    <property type="match status" value="1"/>
</dbReference>
<dbReference type="PRINTS" id="PR01249">
    <property type="entry name" value="RIBOSOMALL31"/>
</dbReference>
<dbReference type="SUPFAM" id="SSF143800">
    <property type="entry name" value="L28p-like"/>
    <property type="match status" value="1"/>
</dbReference>
<dbReference type="PROSITE" id="PS01143">
    <property type="entry name" value="RIBOSOMAL_L31"/>
    <property type="match status" value="1"/>
</dbReference>